<proteinExistence type="inferred from homology"/>
<feature type="chain" id="PRO_0000326931" description="Protoheme IX farnesyltransferase">
    <location>
        <begin position="1"/>
        <end position="295"/>
    </location>
</feature>
<feature type="transmembrane region" description="Helical" evidence="1">
    <location>
        <begin position="9"/>
        <end position="29"/>
    </location>
</feature>
<feature type="transmembrane region" description="Helical" evidence="1">
    <location>
        <begin position="36"/>
        <end position="56"/>
    </location>
</feature>
<feature type="transmembrane region" description="Helical" evidence="1">
    <location>
        <begin position="80"/>
        <end position="100"/>
    </location>
</feature>
<feature type="transmembrane region" description="Helical" evidence="1">
    <location>
        <begin position="108"/>
        <end position="128"/>
    </location>
</feature>
<feature type="transmembrane region" description="Helical" evidence="1">
    <location>
        <begin position="135"/>
        <end position="155"/>
    </location>
</feature>
<feature type="transmembrane region" description="Helical" evidence="1">
    <location>
        <begin position="163"/>
        <end position="183"/>
    </location>
</feature>
<feature type="transmembrane region" description="Helical" evidence="1">
    <location>
        <begin position="209"/>
        <end position="229"/>
    </location>
</feature>
<feature type="transmembrane region" description="Helical" evidence="1">
    <location>
        <begin position="230"/>
        <end position="250"/>
    </location>
</feature>
<feature type="transmembrane region" description="Helical" evidence="1">
    <location>
        <begin position="265"/>
        <end position="285"/>
    </location>
</feature>
<comment type="function">
    <text evidence="1">Converts heme B (protoheme IX) to heme O by substitution of the vinyl group on carbon 2 of heme B porphyrin ring with a hydroxyethyl farnesyl side group.</text>
</comment>
<comment type="catalytic activity">
    <reaction evidence="1">
        <text>heme b + (2E,6E)-farnesyl diphosphate + H2O = Fe(II)-heme o + diphosphate</text>
        <dbReference type="Rhea" id="RHEA:28070"/>
        <dbReference type="ChEBI" id="CHEBI:15377"/>
        <dbReference type="ChEBI" id="CHEBI:33019"/>
        <dbReference type="ChEBI" id="CHEBI:60344"/>
        <dbReference type="ChEBI" id="CHEBI:60530"/>
        <dbReference type="ChEBI" id="CHEBI:175763"/>
        <dbReference type="EC" id="2.5.1.141"/>
    </reaction>
</comment>
<comment type="pathway">
    <text evidence="1">Porphyrin-containing compound metabolism; heme O biosynthesis; heme O from protoheme: step 1/1.</text>
</comment>
<comment type="subcellular location">
    <subcellularLocation>
        <location evidence="1">Cell inner membrane</location>
        <topology evidence="1">Multi-pass membrane protein</topology>
    </subcellularLocation>
</comment>
<comment type="miscellaneous">
    <text evidence="1">Carbon 2 of the heme B porphyrin ring is defined according to the Fischer nomenclature.</text>
</comment>
<comment type="similarity">
    <text evidence="1">Belongs to the UbiA prenyltransferase family. Protoheme IX farnesyltransferase subfamily.</text>
</comment>
<protein>
    <recommendedName>
        <fullName evidence="1">Protoheme IX farnesyltransferase</fullName>
        <ecNumber evidence="1">2.5.1.141</ecNumber>
    </recommendedName>
    <alternativeName>
        <fullName evidence="1">Heme B farnesyltransferase</fullName>
    </alternativeName>
    <alternativeName>
        <fullName evidence="1">Heme O synthase</fullName>
    </alternativeName>
</protein>
<dbReference type="EC" id="2.5.1.141" evidence="1"/>
<dbReference type="EMBL" id="CP000075">
    <property type="protein sequence ID" value="AAY36199.1"/>
    <property type="molecule type" value="Genomic_DNA"/>
</dbReference>
<dbReference type="RefSeq" id="WP_003314082.1">
    <property type="nucleotide sequence ID" value="NC_007005.1"/>
</dbReference>
<dbReference type="RefSeq" id="YP_234237.1">
    <property type="nucleotide sequence ID" value="NC_007005.1"/>
</dbReference>
<dbReference type="SMR" id="Q4ZXC3"/>
<dbReference type="STRING" id="205918.Psyr_1145"/>
<dbReference type="GeneID" id="77277097"/>
<dbReference type="KEGG" id="psb:Psyr_1145"/>
<dbReference type="PATRIC" id="fig|205918.7.peg.1178"/>
<dbReference type="eggNOG" id="COG0109">
    <property type="taxonomic scope" value="Bacteria"/>
</dbReference>
<dbReference type="HOGENOM" id="CLU_029631_0_0_6"/>
<dbReference type="OrthoDB" id="9814417at2"/>
<dbReference type="UniPathway" id="UPA00834">
    <property type="reaction ID" value="UER00712"/>
</dbReference>
<dbReference type="Proteomes" id="UP000000426">
    <property type="component" value="Chromosome"/>
</dbReference>
<dbReference type="GO" id="GO:0005886">
    <property type="term" value="C:plasma membrane"/>
    <property type="evidence" value="ECO:0007669"/>
    <property type="project" value="UniProtKB-SubCell"/>
</dbReference>
<dbReference type="GO" id="GO:0008495">
    <property type="term" value="F:protoheme IX farnesyltransferase activity"/>
    <property type="evidence" value="ECO:0007669"/>
    <property type="project" value="UniProtKB-UniRule"/>
</dbReference>
<dbReference type="GO" id="GO:0048034">
    <property type="term" value="P:heme O biosynthetic process"/>
    <property type="evidence" value="ECO:0007669"/>
    <property type="project" value="UniProtKB-UniRule"/>
</dbReference>
<dbReference type="CDD" id="cd13957">
    <property type="entry name" value="PT_UbiA_Cox10"/>
    <property type="match status" value="1"/>
</dbReference>
<dbReference type="FunFam" id="1.10.357.140:FF:000001">
    <property type="entry name" value="Protoheme IX farnesyltransferase"/>
    <property type="match status" value="1"/>
</dbReference>
<dbReference type="Gene3D" id="1.10.357.140">
    <property type="entry name" value="UbiA prenyltransferase"/>
    <property type="match status" value="1"/>
</dbReference>
<dbReference type="HAMAP" id="MF_00154">
    <property type="entry name" value="CyoE_CtaB"/>
    <property type="match status" value="1"/>
</dbReference>
<dbReference type="InterPro" id="IPR006369">
    <property type="entry name" value="Protohaem_IX_farnesylTrfase"/>
</dbReference>
<dbReference type="InterPro" id="IPR000537">
    <property type="entry name" value="UbiA_prenyltransferase"/>
</dbReference>
<dbReference type="InterPro" id="IPR030470">
    <property type="entry name" value="UbiA_prenylTrfase_CS"/>
</dbReference>
<dbReference type="InterPro" id="IPR044878">
    <property type="entry name" value="UbiA_sf"/>
</dbReference>
<dbReference type="NCBIfam" id="TIGR01473">
    <property type="entry name" value="cyoE_ctaB"/>
    <property type="match status" value="1"/>
</dbReference>
<dbReference type="NCBIfam" id="NF003348">
    <property type="entry name" value="PRK04375.1-1"/>
    <property type="match status" value="1"/>
</dbReference>
<dbReference type="PANTHER" id="PTHR43448">
    <property type="entry name" value="PROTOHEME IX FARNESYLTRANSFERASE, MITOCHONDRIAL"/>
    <property type="match status" value="1"/>
</dbReference>
<dbReference type="PANTHER" id="PTHR43448:SF2">
    <property type="entry name" value="PROTOHEME IX FARNESYLTRANSFERASE, MITOCHONDRIAL"/>
    <property type="match status" value="1"/>
</dbReference>
<dbReference type="Pfam" id="PF01040">
    <property type="entry name" value="UbiA"/>
    <property type="match status" value="1"/>
</dbReference>
<dbReference type="PROSITE" id="PS00943">
    <property type="entry name" value="UBIA"/>
    <property type="match status" value="1"/>
</dbReference>
<keyword id="KW-0997">Cell inner membrane</keyword>
<keyword id="KW-1003">Cell membrane</keyword>
<keyword id="KW-0350">Heme biosynthesis</keyword>
<keyword id="KW-0472">Membrane</keyword>
<keyword id="KW-0808">Transferase</keyword>
<keyword id="KW-0812">Transmembrane</keyword>
<keyword id="KW-1133">Transmembrane helix</keyword>
<organism>
    <name type="scientific">Pseudomonas syringae pv. syringae (strain B728a)</name>
    <dbReference type="NCBI Taxonomy" id="205918"/>
    <lineage>
        <taxon>Bacteria</taxon>
        <taxon>Pseudomonadati</taxon>
        <taxon>Pseudomonadota</taxon>
        <taxon>Gammaproteobacteria</taxon>
        <taxon>Pseudomonadales</taxon>
        <taxon>Pseudomonadaceae</taxon>
        <taxon>Pseudomonas</taxon>
        <taxon>Pseudomonas syringae</taxon>
    </lineage>
</organism>
<accession>Q4ZXC3</accession>
<evidence type="ECO:0000255" key="1">
    <source>
        <dbReference type="HAMAP-Rule" id="MF_00154"/>
    </source>
</evidence>
<gene>
    <name evidence="1" type="primary">cyoE</name>
    <name type="ordered locus">Psyr_1145</name>
</gene>
<reference key="1">
    <citation type="journal article" date="2005" name="Proc. Natl. Acad. Sci. U.S.A.">
        <title>Comparison of the complete genome sequences of Pseudomonas syringae pv. syringae B728a and pv. tomato DC3000.</title>
        <authorList>
            <person name="Feil H."/>
            <person name="Feil W.S."/>
            <person name="Chain P."/>
            <person name="Larimer F."/>
            <person name="Dibartolo G."/>
            <person name="Copeland A."/>
            <person name="Lykidis A."/>
            <person name="Trong S."/>
            <person name="Nolan M."/>
            <person name="Goltsman E."/>
            <person name="Thiel J."/>
            <person name="Malfatti S."/>
            <person name="Loper J.E."/>
            <person name="Lapidus A."/>
            <person name="Detter J.C."/>
            <person name="Land M."/>
            <person name="Richardson P.M."/>
            <person name="Kyrpides N.C."/>
            <person name="Ivanova N."/>
            <person name="Lindow S.E."/>
        </authorList>
    </citation>
    <scope>NUCLEOTIDE SEQUENCE [LARGE SCALE GENOMIC DNA]</scope>
    <source>
        <strain>B728a</strain>
    </source>
</reference>
<sequence>MSLKHFIQITKPGIIFGNVLSVAGGFFLASKGNIDFGVFLAAVIGTSLVVASGCVFNNCIDRDIDQRMERTRNRVLVQGLVSLKLALLYATLLGIAGVGLLYTEANPLAALFAVIGFVIYVGLYSLYLKRRSVHGTLVGSLSGAMPPVIGYCAVSNSFDFAALTLLVMFSLWQMPHSYAIAIFRFNDYRAAKIPVLPVKRGILVTKRHIMLYILAFLVATLMLTVGGYAGLNYLAVAAGMGMYWLYMAWKGYKAVDDTVWARKLFVFSIFTITALSVMMSVDFQVTKELLVTYAF</sequence>
<name>CYOE_PSEU2</name>